<keyword id="KW-0210">Decarboxylase</keyword>
<keyword id="KW-0456">Lyase</keyword>
<keyword id="KW-0460">Magnesium</keyword>
<keyword id="KW-0479">Metal-binding</keyword>
<keyword id="KW-0786">Thiamine pyrophosphate</keyword>
<name>PDC_HANUV</name>
<dbReference type="EC" id="4.1.1.1"/>
<dbReference type="EMBL" id="U13635">
    <property type="protein sequence ID" value="AAA85103.1"/>
    <property type="molecule type" value="Genomic_DNA"/>
</dbReference>
<dbReference type="PIR" id="S50700">
    <property type="entry name" value="S50700"/>
</dbReference>
<dbReference type="SMR" id="P34734"/>
<dbReference type="VEuPathDB" id="FungiDB:AWRI3580_g175"/>
<dbReference type="GO" id="GO:0005829">
    <property type="term" value="C:cytosol"/>
    <property type="evidence" value="ECO:0007669"/>
    <property type="project" value="TreeGrafter"/>
</dbReference>
<dbReference type="GO" id="GO:0005634">
    <property type="term" value="C:nucleus"/>
    <property type="evidence" value="ECO:0007669"/>
    <property type="project" value="TreeGrafter"/>
</dbReference>
<dbReference type="GO" id="GO:0000287">
    <property type="term" value="F:magnesium ion binding"/>
    <property type="evidence" value="ECO:0007669"/>
    <property type="project" value="InterPro"/>
</dbReference>
<dbReference type="GO" id="GO:0004737">
    <property type="term" value="F:pyruvate decarboxylase activity"/>
    <property type="evidence" value="ECO:0007669"/>
    <property type="project" value="UniProtKB-EC"/>
</dbReference>
<dbReference type="GO" id="GO:0030976">
    <property type="term" value="F:thiamine pyrophosphate binding"/>
    <property type="evidence" value="ECO:0007669"/>
    <property type="project" value="InterPro"/>
</dbReference>
<dbReference type="GO" id="GO:0000949">
    <property type="term" value="P:aromatic amino acid family catabolic process to alcohol via Ehrlich pathway"/>
    <property type="evidence" value="ECO:0007669"/>
    <property type="project" value="TreeGrafter"/>
</dbReference>
<dbReference type="CDD" id="cd02005">
    <property type="entry name" value="TPP_PDC_IPDC"/>
    <property type="match status" value="1"/>
</dbReference>
<dbReference type="CDD" id="cd07038">
    <property type="entry name" value="TPP_PYR_PDC_IPDC_like"/>
    <property type="match status" value="1"/>
</dbReference>
<dbReference type="FunFam" id="3.40.50.1220:FF:000018">
    <property type="entry name" value="Pyruvate decarboxylase isozyme"/>
    <property type="match status" value="1"/>
</dbReference>
<dbReference type="FunFam" id="3.40.50.970:FF:000019">
    <property type="entry name" value="Pyruvate decarboxylase isozyme"/>
    <property type="match status" value="1"/>
</dbReference>
<dbReference type="FunFam" id="3.40.50.970:FF:000024">
    <property type="entry name" value="Pyruvate decarboxylase isozyme"/>
    <property type="match status" value="1"/>
</dbReference>
<dbReference type="Gene3D" id="3.40.50.970">
    <property type="match status" value="2"/>
</dbReference>
<dbReference type="Gene3D" id="3.40.50.1220">
    <property type="entry name" value="TPP-binding domain"/>
    <property type="match status" value="1"/>
</dbReference>
<dbReference type="InterPro" id="IPR029035">
    <property type="entry name" value="DHS-like_NAD/FAD-binding_dom"/>
</dbReference>
<dbReference type="InterPro" id="IPR012110">
    <property type="entry name" value="PDC/IPDC-like"/>
</dbReference>
<dbReference type="InterPro" id="IPR029061">
    <property type="entry name" value="THDP-binding"/>
</dbReference>
<dbReference type="InterPro" id="IPR012000">
    <property type="entry name" value="Thiamin_PyroP_enz_cen_dom"/>
</dbReference>
<dbReference type="InterPro" id="IPR012001">
    <property type="entry name" value="Thiamin_PyroP_enz_TPP-bd_dom"/>
</dbReference>
<dbReference type="InterPro" id="IPR011766">
    <property type="entry name" value="TPP_enzyme_TPP-bd"/>
</dbReference>
<dbReference type="InterPro" id="IPR047214">
    <property type="entry name" value="TPP_PDC_IPDC"/>
</dbReference>
<dbReference type="InterPro" id="IPR047213">
    <property type="entry name" value="TPP_PYR_PDC_IPDC-like"/>
</dbReference>
<dbReference type="PANTHER" id="PTHR43452">
    <property type="entry name" value="PYRUVATE DECARBOXYLASE"/>
    <property type="match status" value="1"/>
</dbReference>
<dbReference type="PANTHER" id="PTHR43452:SF30">
    <property type="entry name" value="PYRUVATE DECARBOXYLASE ISOZYME 1-RELATED"/>
    <property type="match status" value="1"/>
</dbReference>
<dbReference type="Pfam" id="PF02775">
    <property type="entry name" value="TPP_enzyme_C"/>
    <property type="match status" value="1"/>
</dbReference>
<dbReference type="Pfam" id="PF00205">
    <property type="entry name" value="TPP_enzyme_M"/>
    <property type="match status" value="1"/>
</dbReference>
<dbReference type="Pfam" id="PF02776">
    <property type="entry name" value="TPP_enzyme_N"/>
    <property type="match status" value="1"/>
</dbReference>
<dbReference type="PIRSF" id="PIRSF036565">
    <property type="entry name" value="Pyruvt_ip_decrb"/>
    <property type="match status" value="1"/>
</dbReference>
<dbReference type="SUPFAM" id="SSF52467">
    <property type="entry name" value="DHS-like NAD/FAD-binding domain"/>
    <property type="match status" value="1"/>
</dbReference>
<dbReference type="SUPFAM" id="SSF52518">
    <property type="entry name" value="Thiamin diphosphate-binding fold (THDP-binding)"/>
    <property type="match status" value="2"/>
</dbReference>
<comment type="catalytic activity">
    <reaction>
        <text>a 2-oxocarboxylate + H(+) = an aldehyde + CO2</text>
        <dbReference type="Rhea" id="RHEA:11628"/>
        <dbReference type="ChEBI" id="CHEBI:15378"/>
        <dbReference type="ChEBI" id="CHEBI:16526"/>
        <dbReference type="ChEBI" id="CHEBI:17478"/>
        <dbReference type="ChEBI" id="CHEBI:35179"/>
        <dbReference type="EC" id="4.1.1.1"/>
    </reaction>
</comment>
<comment type="catalytic activity">
    <reaction evidence="2">
        <text>pyruvate + H(+) = acetaldehyde + CO2</text>
        <dbReference type="Rhea" id="RHEA:45484"/>
        <dbReference type="ChEBI" id="CHEBI:15343"/>
        <dbReference type="ChEBI" id="CHEBI:15361"/>
        <dbReference type="ChEBI" id="CHEBI:15378"/>
        <dbReference type="ChEBI" id="CHEBI:16526"/>
    </reaction>
</comment>
<comment type="cofactor">
    <cofactor evidence="2">
        <name>Mg(2+)</name>
        <dbReference type="ChEBI" id="CHEBI:18420"/>
    </cofactor>
    <text evidence="2">Binds 1 Mg(2+) per subunit.</text>
</comment>
<comment type="cofactor">
    <cofactor evidence="2">
        <name>thiamine diphosphate</name>
        <dbReference type="ChEBI" id="CHEBI:58937"/>
    </cofactor>
    <text evidence="2">Binds 1 thiamine pyrophosphate per subunit.</text>
</comment>
<comment type="subunit">
    <text evidence="1">Homotetramer.</text>
</comment>
<comment type="similarity">
    <text evidence="3">Belongs to the TPP enzyme family.</text>
</comment>
<protein>
    <recommendedName>
        <fullName>Pyruvate decarboxylase</fullName>
        <ecNumber>4.1.1.1</ecNumber>
    </recommendedName>
</protein>
<evidence type="ECO:0000250" key="1"/>
<evidence type="ECO:0000250" key="2">
    <source>
        <dbReference type="UniProtKB" id="P06169"/>
    </source>
</evidence>
<evidence type="ECO:0000305" key="3"/>
<accession>P34734</accession>
<reference key="1">
    <citation type="journal article" date="1994" name="Yeast">
        <title>The nucleotide sequence and initial characterization of pyruvate decarboxylase from the yeast Hanseniaspora uvarum.</title>
        <authorList>
            <person name="Holloway P."/>
            <person name="Subden R.E."/>
        </authorList>
    </citation>
    <scope>NUCLEOTIDE SEQUENCE [GENOMIC DNA]</scope>
    <source>
        <strain>Isolate R15</strain>
    </source>
</reference>
<gene>
    <name type="primary">PDC</name>
</gene>
<organism>
    <name type="scientific">Hanseniaspora uvarum</name>
    <name type="common">Yeast</name>
    <name type="synonym">Kloeckera apiculata</name>
    <dbReference type="NCBI Taxonomy" id="29833"/>
    <lineage>
        <taxon>Eukaryota</taxon>
        <taxon>Fungi</taxon>
        <taxon>Dikarya</taxon>
        <taxon>Ascomycota</taxon>
        <taxon>Saccharomycotina</taxon>
        <taxon>Saccharomycetes</taxon>
        <taxon>Saccharomycodales</taxon>
        <taxon>Saccharomycodaceae</taxon>
        <taxon>Hanseniaspora</taxon>
    </lineage>
</organism>
<proteinExistence type="inferred from homology"/>
<feature type="chain" id="PRO_0000090764" description="Pyruvate decarboxylase">
    <location>
        <begin position="1"/>
        <end position="564"/>
    </location>
</feature>
<feature type="binding site" evidence="2">
    <location>
        <position position="28"/>
    </location>
    <ligand>
        <name>pyruvate</name>
        <dbReference type="ChEBI" id="CHEBI:15361"/>
        <note>ligand shared between two neighboring subunits</note>
    </ligand>
</feature>
<feature type="binding site" evidence="2">
    <location>
        <position position="115"/>
    </location>
    <ligand>
        <name>pyruvate</name>
        <dbReference type="ChEBI" id="CHEBI:15361"/>
        <note>ligand shared between two neighboring subunits</note>
    </ligand>
</feature>
<feature type="binding site" evidence="2">
    <location>
        <position position="390"/>
    </location>
    <ligand>
        <name>thiamine diphosphate</name>
        <dbReference type="ChEBI" id="CHEBI:58937"/>
    </ligand>
</feature>
<feature type="binding site" evidence="2">
    <location>
        <begin position="413"/>
        <end position="415"/>
    </location>
    <ligand>
        <name>thiamine diphosphate</name>
        <dbReference type="ChEBI" id="CHEBI:58937"/>
    </ligand>
</feature>
<feature type="binding site" evidence="2">
    <location>
        <position position="444"/>
    </location>
    <ligand>
        <name>Mg(2+)</name>
        <dbReference type="ChEBI" id="CHEBI:18420"/>
    </ligand>
</feature>
<feature type="binding site" evidence="2">
    <location>
        <begin position="445"/>
        <end position="446"/>
    </location>
    <ligand>
        <name>thiamine diphosphate</name>
        <dbReference type="ChEBI" id="CHEBI:58937"/>
    </ligand>
</feature>
<feature type="binding site" evidence="2">
    <location>
        <begin position="471"/>
        <end position="476"/>
    </location>
    <ligand>
        <name>thiamine diphosphate</name>
        <dbReference type="ChEBI" id="CHEBI:58937"/>
    </ligand>
</feature>
<feature type="binding site" evidence="2">
    <location>
        <position position="471"/>
    </location>
    <ligand>
        <name>Mg(2+)</name>
        <dbReference type="ChEBI" id="CHEBI:18420"/>
    </ligand>
</feature>
<feature type="binding site" evidence="2">
    <location>
        <position position="473"/>
    </location>
    <ligand>
        <name>Mg(2+)</name>
        <dbReference type="ChEBI" id="CHEBI:18420"/>
    </ligand>
</feature>
<feature type="binding site" evidence="2">
    <location>
        <position position="477"/>
    </location>
    <ligand>
        <name>pyruvate</name>
        <dbReference type="ChEBI" id="CHEBI:15361"/>
        <note>ligand shared between two neighboring subunits</note>
    </ligand>
</feature>
<sequence length="564" mass="61070">MSEITLGRYVFERIKQVGVNTIFGLPGDFNLSLLDKIYEVEGLRWAASLNELNAAYAADGYSRIKGLGVIITTFGVGELSALNGIAGAYAEHVGVLHIVGVPSLASQAKQLLLHHTLGNGDFDVFHRMSANISETTAMITDLAAAPAEIDRCIRTAYIAQRPVYLGLPANLVDLNVPAKLLETKIDLALKANDAEAENEVVETILALVADAKNPVILSDACASRHNVKAEVKQLIDATQFPAFVTPLGKGSIDEKHPRFGGVYVGTLSSPEVKQSVESADLILSVGALLSDFNTGSFSYSYQTKNIVEFHSDYIKIKNASFPGVQMKFVLEKLIAKVGAKIANYSPVPVPAGLPKNAPVADSTPLAQEWLWNELGEFLEEGDIVVTETGTSAFGINQTRFPTDAYGISQVLWGSIGYSVGAMVGATFAAEELDKAKRVILFVGDGSLQLTVQEIACLIRWGLKPYIFVLNNNGYTIEKLIHGPTAQYNMIQNWKQLRYLTNFGATDYEAIPVKTVGEWKKLTADPAFKKNSTIRLIEVFLPEMDAPSSLVAQANLTAAINAKQD</sequence>